<keyword id="KW-0028">Amino-acid biosynthesis</keyword>
<keyword id="KW-0057">Aromatic amino acid biosynthesis</keyword>
<keyword id="KW-0315">Glutamine amidotransferase</keyword>
<keyword id="KW-0456">Lyase</keyword>
<keyword id="KW-0822">Tryptophan biosynthesis</keyword>
<accession>P22101</accession>
<organism>
    <name type="scientific">Vibrio parahaemolyticus serotype O3:K6 (strain RIMD 2210633)</name>
    <dbReference type="NCBI Taxonomy" id="223926"/>
    <lineage>
        <taxon>Bacteria</taxon>
        <taxon>Pseudomonadati</taxon>
        <taxon>Pseudomonadota</taxon>
        <taxon>Gammaproteobacteria</taxon>
        <taxon>Vibrionales</taxon>
        <taxon>Vibrionaceae</taxon>
        <taxon>Vibrio</taxon>
    </lineage>
</organism>
<dbReference type="EC" id="4.1.3.27"/>
<dbReference type="EMBL" id="X17149">
    <property type="protein sequence ID" value="CAA35032.1"/>
    <property type="molecule type" value="Genomic_DNA"/>
</dbReference>
<dbReference type="EMBL" id="BA000031">
    <property type="protein sequence ID" value="BAC60220.1"/>
    <property type="molecule type" value="Genomic_DNA"/>
</dbReference>
<dbReference type="RefSeq" id="NP_798336.1">
    <property type="nucleotide sequence ID" value="NC_004603.1"/>
</dbReference>
<dbReference type="RefSeq" id="WP_005465090.1">
    <property type="nucleotide sequence ID" value="NC_004603.1"/>
</dbReference>
<dbReference type="SMR" id="P22101"/>
<dbReference type="MEROPS" id="C26.960"/>
<dbReference type="GeneID" id="1189468"/>
<dbReference type="KEGG" id="vpa:VP1957"/>
<dbReference type="PATRIC" id="fig|223926.6.peg.1872"/>
<dbReference type="eggNOG" id="COG0512">
    <property type="taxonomic scope" value="Bacteria"/>
</dbReference>
<dbReference type="HOGENOM" id="CLU_014340_1_0_6"/>
<dbReference type="UniPathway" id="UPA00035">
    <property type="reaction ID" value="UER00040"/>
</dbReference>
<dbReference type="Proteomes" id="UP000002493">
    <property type="component" value="Chromosome 1"/>
</dbReference>
<dbReference type="GO" id="GO:0005829">
    <property type="term" value="C:cytosol"/>
    <property type="evidence" value="ECO:0007669"/>
    <property type="project" value="TreeGrafter"/>
</dbReference>
<dbReference type="GO" id="GO:0004048">
    <property type="term" value="F:anthranilate phosphoribosyltransferase activity"/>
    <property type="evidence" value="ECO:0007669"/>
    <property type="project" value="TreeGrafter"/>
</dbReference>
<dbReference type="GO" id="GO:0004049">
    <property type="term" value="F:anthranilate synthase activity"/>
    <property type="evidence" value="ECO:0007669"/>
    <property type="project" value="UniProtKB-EC"/>
</dbReference>
<dbReference type="GO" id="GO:0000162">
    <property type="term" value="P:L-tryptophan biosynthetic process"/>
    <property type="evidence" value="ECO:0007669"/>
    <property type="project" value="UniProtKB-UniPathway"/>
</dbReference>
<dbReference type="GO" id="GO:0002047">
    <property type="term" value="P:phenazine biosynthetic process"/>
    <property type="evidence" value="ECO:0007669"/>
    <property type="project" value="TreeGrafter"/>
</dbReference>
<dbReference type="CDD" id="cd01743">
    <property type="entry name" value="GATase1_Anthranilate_Synthase"/>
    <property type="match status" value="1"/>
</dbReference>
<dbReference type="FunFam" id="3.40.50.880:FF:000003">
    <property type="entry name" value="Anthranilate synthase component II"/>
    <property type="match status" value="1"/>
</dbReference>
<dbReference type="Gene3D" id="3.40.50.880">
    <property type="match status" value="1"/>
</dbReference>
<dbReference type="InterPro" id="IPR050472">
    <property type="entry name" value="Anth_synth/Amidotransfase"/>
</dbReference>
<dbReference type="InterPro" id="IPR029062">
    <property type="entry name" value="Class_I_gatase-like"/>
</dbReference>
<dbReference type="InterPro" id="IPR017926">
    <property type="entry name" value="GATASE"/>
</dbReference>
<dbReference type="InterPro" id="IPR006221">
    <property type="entry name" value="TrpG/PapA_dom"/>
</dbReference>
<dbReference type="NCBIfam" id="TIGR00566">
    <property type="entry name" value="trpG_papA"/>
    <property type="match status" value="1"/>
</dbReference>
<dbReference type="PANTHER" id="PTHR43418:SF2">
    <property type="entry name" value="BIFUNCTIONAL PROTEIN TRPGD"/>
    <property type="match status" value="1"/>
</dbReference>
<dbReference type="PANTHER" id="PTHR43418">
    <property type="entry name" value="MULTIFUNCTIONAL TRYPTOPHAN BIOSYNTHESIS PROTEIN-RELATED"/>
    <property type="match status" value="1"/>
</dbReference>
<dbReference type="Pfam" id="PF00117">
    <property type="entry name" value="GATase"/>
    <property type="match status" value="1"/>
</dbReference>
<dbReference type="PRINTS" id="PR00097">
    <property type="entry name" value="ANTSNTHASEII"/>
</dbReference>
<dbReference type="PRINTS" id="PR00099">
    <property type="entry name" value="CPSGATASE"/>
</dbReference>
<dbReference type="PRINTS" id="PR00096">
    <property type="entry name" value="GATASE"/>
</dbReference>
<dbReference type="SUPFAM" id="SSF52317">
    <property type="entry name" value="Class I glutamine amidotransferase-like"/>
    <property type="match status" value="1"/>
</dbReference>
<dbReference type="PROSITE" id="PS51273">
    <property type="entry name" value="GATASE_TYPE_1"/>
    <property type="match status" value="1"/>
</dbReference>
<protein>
    <recommendedName>
        <fullName>Anthranilate synthase component 2</fullName>
        <shortName>AS</shortName>
        <shortName>ASII</shortName>
        <ecNumber>4.1.3.27</ecNumber>
    </recommendedName>
    <alternativeName>
        <fullName>Anthranilate synthase, GATase component</fullName>
    </alternativeName>
    <alternativeName>
        <fullName>Anthranilate synthase, glutamine amidotransferase component</fullName>
    </alternativeName>
</protein>
<name>TRPG_VIBPA</name>
<sequence>MANIVFIDNFDSFTYNLVDQFRSLGHSVKIYRNHIPAETIEQAINELENPVVLLSPGPGAPSEAGSMPELIQRMKGKVPMIGICLGHQAIVEAYGGTVAGAGEIIHGKVSMMEHQDHAIYQNLPSPLAIARYHSLVATKVPDSLTITAEVDNLVMSVVHEQDKVCGFQFHPESIMTTYGATLLGNAIEWALEKNNA</sequence>
<reference key="1">
    <citation type="journal article" date="1991" name="DNA Seq.">
        <title>Sequence and features of the tryptophan operon of Vibrio parahemolyticus.</title>
        <authorList>
            <person name="Crawford I.P."/>
            <person name="Han C.Y."/>
            <person name="Silverman M."/>
        </authorList>
    </citation>
    <scope>NUCLEOTIDE SEQUENCE [GENOMIC DNA]</scope>
    <source>
        <strain>BB22</strain>
    </source>
</reference>
<reference key="2">
    <citation type="journal article" date="2003" name="Lancet">
        <title>Genome sequence of Vibrio parahaemolyticus: a pathogenic mechanism distinct from that of V. cholerae.</title>
        <authorList>
            <person name="Makino K."/>
            <person name="Oshima K."/>
            <person name="Kurokawa K."/>
            <person name="Yokoyama K."/>
            <person name="Uda T."/>
            <person name="Tagomori K."/>
            <person name="Iijima Y."/>
            <person name="Najima M."/>
            <person name="Nakano M."/>
            <person name="Yamashita A."/>
            <person name="Kubota Y."/>
            <person name="Kimura S."/>
            <person name="Yasunaga T."/>
            <person name="Honda T."/>
            <person name="Shinagawa H."/>
            <person name="Hattori M."/>
            <person name="Iida T."/>
        </authorList>
    </citation>
    <scope>NUCLEOTIDE SEQUENCE [LARGE SCALE GENOMIC DNA]</scope>
    <source>
        <strain>RIMD 2210633</strain>
    </source>
</reference>
<comment type="function">
    <text evidence="1">Part of a heterotetrameric complex that catalyzes the two-step biosynthesis of anthranilate, an intermediate in the biosynthesis of L-tryptophan. In the first step, the glutamine-binding beta subunit (TrpG) of anthranilate synthase (AS) provides the glutamine amidotransferase activity which generates ammonia as a substrate that, along with chorismate, is used in the second step, catalyzed by the large alpha subunit of AS (TrpE) to produce anthranilate. In the absence of TrpG, TrpE can synthesize anthranilate directly from chorismate and high concentrations of ammonia (By similarity).</text>
</comment>
<comment type="catalytic activity">
    <reaction>
        <text>chorismate + L-glutamine = anthranilate + pyruvate + L-glutamate + H(+)</text>
        <dbReference type="Rhea" id="RHEA:21732"/>
        <dbReference type="ChEBI" id="CHEBI:15361"/>
        <dbReference type="ChEBI" id="CHEBI:15378"/>
        <dbReference type="ChEBI" id="CHEBI:16567"/>
        <dbReference type="ChEBI" id="CHEBI:29748"/>
        <dbReference type="ChEBI" id="CHEBI:29985"/>
        <dbReference type="ChEBI" id="CHEBI:58359"/>
        <dbReference type="EC" id="4.1.3.27"/>
    </reaction>
</comment>
<comment type="pathway">
    <text>Amino-acid biosynthesis; L-tryptophan biosynthesis; L-tryptophan from chorismate: step 1/5.</text>
</comment>
<comment type="subunit">
    <text evidence="1">Heterotetramer consisting of two non-identical subunits: a beta subunit (TrpG) and a large alpha subunit (TrpE).</text>
</comment>
<gene>
    <name type="primary">trpG</name>
    <name type="ordered locus">VP1957</name>
</gene>
<evidence type="ECO:0000250" key="1"/>
<evidence type="ECO:0000250" key="2">
    <source>
        <dbReference type="UniProtKB" id="P00900"/>
    </source>
</evidence>
<evidence type="ECO:0000255" key="3">
    <source>
        <dbReference type="PROSITE-ProRule" id="PRU00605"/>
    </source>
</evidence>
<feature type="chain" id="PRO_0000056904" description="Anthranilate synthase component 2">
    <location>
        <begin position="1"/>
        <end position="196"/>
    </location>
</feature>
<feature type="domain" description="Glutamine amidotransferase type-1" evidence="3">
    <location>
        <begin position="3"/>
        <end position="196"/>
    </location>
</feature>
<feature type="active site" description="Nucleophile; for GATase activity" evidence="3">
    <location>
        <position position="84"/>
    </location>
</feature>
<feature type="active site" description="For GATase activity" evidence="3">
    <location>
        <position position="170"/>
    </location>
</feature>
<feature type="active site" description="For GATase activity" evidence="3">
    <location>
        <position position="172"/>
    </location>
</feature>
<feature type="binding site" evidence="2">
    <location>
        <begin position="57"/>
        <end position="59"/>
    </location>
    <ligand>
        <name>L-glutamine</name>
        <dbReference type="ChEBI" id="CHEBI:58359"/>
    </ligand>
</feature>
<feature type="binding site" evidence="2">
    <location>
        <position position="88"/>
    </location>
    <ligand>
        <name>L-glutamine</name>
        <dbReference type="ChEBI" id="CHEBI:58359"/>
    </ligand>
</feature>
<feature type="binding site" evidence="2">
    <location>
        <begin position="134"/>
        <end position="135"/>
    </location>
    <ligand>
        <name>L-glutamine</name>
        <dbReference type="ChEBI" id="CHEBI:58359"/>
    </ligand>
</feature>
<proteinExistence type="inferred from homology"/>